<reference key="1">
    <citation type="journal article" date="2000" name="Nature">
        <title>The genome sequence of the plant pathogen Xylella fastidiosa.</title>
        <authorList>
            <person name="Simpson A.J.G."/>
            <person name="Reinach F.C."/>
            <person name="Arruda P."/>
            <person name="Abreu F.A."/>
            <person name="Acencio M."/>
            <person name="Alvarenga R."/>
            <person name="Alves L.M.C."/>
            <person name="Araya J.E."/>
            <person name="Baia G.S."/>
            <person name="Baptista C.S."/>
            <person name="Barros M.H."/>
            <person name="Bonaccorsi E.D."/>
            <person name="Bordin S."/>
            <person name="Bove J.M."/>
            <person name="Briones M.R.S."/>
            <person name="Bueno M.R.P."/>
            <person name="Camargo A.A."/>
            <person name="Camargo L.E.A."/>
            <person name="Carraro D.M."/>
            <person name="Carrer H."/>
            <person name="Colauto N.B."/>
            <person name="Colombo C."/>
            <person name="Costa F.F."/>
            <person name="Costa M.C.R."/>
            <person name="Costa-Neto C.M."/>
            <person name="Coutinho L.L."/>
            <person name="Cristofani M."/>
            <person name="Dias-Neto E."/>
            <person name="Docena C."/>
            <person name="El-Dorry H."/>
            <person name="Facincani A.P."/>
            <person name="Ferreira A.J.S."/>
            <person name="Ferreira V.C.A."/>
            <person name="Ferro J.A."/>
            <person name="Fraga J.S."/>
            <person name="Franca S.C."/>
            <person name="Franco M.C."/>
            <person name="Frohme M."/>
            <person name="Furlan L.R."/>
            <person name="Garnier M."/>
            <person name="Goldman G.H."/>
            <person name="Goldman M.H.S."/>
            <person name="Gomes S.L."/>
            <person name="Gruber A."/>
            <person name="Ho P.L."/>
            <person name="Hoheisel J.D."/>
            <person name="Junqueira M.L."/>
            <person name="Kemper E.L."/>
            <person name="Kitajima J.P."/>
            <person name="Krieger J.E."/>
            <person name="Kuramae E.E."/>
            <person name="Laigret F."/>
            <person name="Lambais M.R."/>
            <person name="Leite L.C.C."/>
            <person name="Lemos E.G.M."/>
            <person name="Lemos M.V.F."/>
            <person name="Lopes S.A."/>
            <person name="Lopes C.R."/>
            <person name="Machado J.A."/>
            <person name="Machado M.A."/>
            <person name="Madeira A.M.B.N."/>
            <person name="Madeira H.M.F."/>
            <person name="Marino C.L."/>
            <person name="Marques M.V."/>
            <person name="Martins E.A.L."/>
            <person name="Martins E.M.F."/>
            <person name="Matsukuma A.Y."/>
            <person name="Menck C.F.M."/>
            <person name="Miracca E.C."/>
            <person name="Miyaki C.Y."/>
            <person name="Monteiro-Vitorello C.B."/>
            <person name="Moon D.H."/>
            <person name="Nagai M.A."/>
            <person name="Nascimento A.L.T.O."/>
            <person name="Netto L.E.S."/>
            <person name="Nhani A. Jr."/>
            <person name="Nobrega F.G."/>
            <person name="Nunes L.R."/>
            <person name="Oliveira M.A."/>
            <person name="de Oliveira M.C."/>
            <person name="de Oliveira R.C."/>
            <person name="Palmieri D.A."/>
            <person name="Paris A."/>
            <person name="Peixoto B.R."/>
            <person name="Pereira G.A.G."/>
            <person name="Pereira H.A. Jr."/>
            <person name="Pesquero J.B."/>
            <person name="Quaggio R.B."/>
            <person name="Roberto P.G."/>
            <person name="Rodrigues V."/>
            <person name="de Rosa A.J.M."/>
            <person name="de Rosa V.E. Jr."/>
            <person name="de Sa R.G."/>
            <person name="Santelli R.V."/>
            <person name="Sawasaki H.E."/>
            <person name="da Silva A.C.R."/>
            <person name="da Silva A.M."/>
            <person name="da Silva F.R."/>
            <person name="Silva W.A. Jr."/>
            <person name="da Silveira J.F."/>
            <person name="Silvestri M.L.Z."/>
            <person name="Siqueira W.J."/>
            <person name="de Souza A.A."/>
            <person name="de Souza A.P."/>
            <person name="Terenzi M.F."/>
            <person name="Truffi D."/>
            <person name="Tsai S.M."/>
            <person name="Tsuhako M.H."/>
            <person name="Vallada H."/>
            <person name="Van Sluys M.A."/>
            <person name="Verjovski-Almeida S."/>
            <person name="Vettore A.L."/>
            <person name="Zago M.A."/>
            <person name="Zatz M."/>
            <person name="Meidanis J."/>
            <person name="Setubal J.C."/>
        </authorList>
    </citation>
    <scope>NUCLEOTIDE SEQUENCE [LARGE SCALE GENOMIC DNA]</scope>
    <source>
        <strain>9a5c</strain>
    </source>
</reference>
<gene>
    <name evidence="1" type="primary">rsgA</name>
    <name type="ordered locus">XF_0556</name>
</gene>
<evidence type="ECO:0000255" key="1">
    <source>
        <dbReference type="HAMAP-Rule" id="MF_01820"/>
    </source>
</evidence>
<evidence type="ECO:0000255" key="2">
    <source>
        <dbReference type="PROSITE-ProRule" id="PRU01058"/>
    </source>
</evidence>
<protein>
    <recommendedName>
        <fullName evidence="1">Small ribosomal subunit biogenesis GTPase RsgA</fullName>
        <ecNumber evidence="1">3.6.1.-</ecNumber>
    </recommendedName>
</protein>
<keyword id="KW-0963">Cytoplasm</keyword>
<keyword id="KW-0342">GTP-binding</keyword>
<keyword id="KW-0378">Hydrolase</keyword>
<keyword id="KW-0479">Metal-binding</keyword>
<keyword id="KW-0547">Nucleotide-binding</keyword>
<keyword id="KW-0690">Ribosome biogenesis</keyword>
<keyword id="KW-0694">RNA-binding</keyword>
<keyword id="KW-0699">rRNA-binding</keyword>
<keyword id="KW-0862">Zinc</keyword>
<organism>
    <name type="scientific">Xylella fastidiosa (strain 9a5c)</name>
    <dbReference type="NCBI Taxonomy" id="160492"/>
    <lineage>
        <taxon>Bacteria</taxon>
        <taxon>Pseudomonadati</taxon>
        <taxon>Pseudomonadota</taxon>
        <taxon>Gammaproteobacteria</taxon>
        <taxon>Lysobacterales</taxon>
        <taxon>Lysobacteraceae</taxon>
        <taxon>Xylella</taxon>
    </lineage>
</organism>
<name>RSGA_XYLFA</name>
<accession>Q9PFV1</accession>
<sequence>MIEPVVGYRMLQAIGWPWPGPPADAAWQAMCAVYSQCRPARVIEQHRSGYVVAEAPEVPIKVESLPAWQRRGFPRHERAVVGDWVLLDGRRIVALLPRRTVIKRLAAGEHYRQQLIAANLDTAFIVCGLDGDFNPRRIERYCVLIGSGGVEPVVVLTKVDLCADVGAAVAVLREHSSQALAVVAVDAREAEPVAALYPWLLPGRTVALLGSSGAGKSTLTNTLLGEQRMKVGEVRQRDSRGRHTTTHRALLPLPSGACLIDTPGMRELKFTGEEDLVEEFADIELLATQCRFRDCAHQAEPGCAVRAAIGCGTLDPQRLHHYFKLRGEIVGAADRSTLRRY</sequence>
<dbReference type="EC" id="3.6.1.-" evidence="1"/>
<dbReference type="EMBL" id="AE003849">
    <property type="protein sequence ID" value="AAF83366.1"/>
    <property type="molecule type" value="Genomic_DNA"/>
</dbReference>
<dbReference type="PIR" id="B82790">
    <property type="entry name" value="B82790"/>
</dbReference>
<dbReference type="RefSeq" id="WP_010893082.1">
    <property type="nucleotide sequence ID" value="NC_002488.3"/>
</dbReference>
<dbReference type="SMR" id="Q9PFV1"/>
<dbReference type="STRING" id="160492.XF_0556"/>
<dbReference type="KEGG" id="xfa:XF_0556"/>
<dbReference type="eggNOG" id="COG1162">
    <property type="taxonomic scope" value="Bacteria"/>
</dbReference>
<dbReference type="HOGENOM" id="CLU_033617_0_1_6"/>
<dbReference type="Proteomes" id="UP000000812">
    <property type="component" value="Chromosome"/>
</dbReference>
<dbReference type="GO" id="GO:0005737">
    <property type="term" value="C:cytoplasm"/>
    <property type="evidence" value="ECO:0007669"/>
    <property type="project" value="UniProtKB-SubCell"/>
</dbReference>
<dbReference type="GO" id="GO:0005525">
    <property type="term" value="F:GTP binding"/>
    <property type="evidence" value="ECO:0007669"/>
    <property type="project" value="UniProtKB-UniRule"/>
</dbReference>
<dbReference type="GO" id="GO:0003924">
    <property type="term" value="F:GTPase activity"/>
    <property type="evidence" value="ECO:0007669"/>
    <property type="project" value="UniProtKB-UniRule"/>
</dbReference>
<dbReference type="GO" id="GO:0046872">
    <property type="term" value="F:metal ion binding"/>
    <property type="evidence" value="ECO:0007669"/>
    <property type="project" value="UniProtKB-KW"/>
</dbReference>
<dbReference type="GO" id="GO:0019843">
    <property type="term" value="F:rRNA binding"/>
    <property type="evidence" value="ECO:0007669"/>
    <property type="project" value="UniProtKB-KW"/>
</dbReference>
<dbReference type="GO" id="GO:0042274">
    <property type="term" value="P:ribosomal small subunit biogenesis"/>
    <property type="evidence" value="ECO:0007669"/>
    <property type="project" value="UniProtKB-UniRule"/>
</dbReference>
<dbReference type="CDD" id="cd01854">
    <property type="entry name" value="YjeQ_EngC"/>
    <property type="match status" value="1"/>
</dbReference>
<dbReference type="Gene3D" id="3.40.50.300">
    <property type="entry name" value="P-loop containing nucleotide triphosphate hydrolases"/>
    <property type="match status" value="1"/>
</dbReference>
<dbReference type="Gene3D" id="1.10.40.50">
    <property type="entry name" value="Probable gtpase engc, domain 3"/>
    <property type="match status" value="1"/>
</dbReference>
<dbReference type="HAMAP" id="MF_01820">
    <property type="entry name" value="GTPase_RsgA"/>
    <property type="match status" value="1"/>
</dbReference>
<dbReference type="InterPro" id="IPR030378">
    <property type="entry name" value="G_CP_dom"/>
</dbReference>
<dbReference type="InterPro" id="IPR027417">
    <property type="entry name" value="P-loop_NTPase"/>
</dbReference>
<dbReference type="InterPro" id="IPR004881">
    <property type="entry name" value="Ribosome_biogen_GTPase_RsgA"/>
</dbReference>
<dbReference type="InterPro" id="IPR010914">
    <property type="entry name" value="RsgA_GTPase_dom"/>
</dbReference>
<dbReference type="NCBIfam" id="TIGR00157">
    <property type="entry name" value="ribosome small subunit-dependent GTPase A"/>
    <property type="match status" value="1"/>
</dbReference>
<dbReference type="PANTHER" id="PTHR32120">
    <property type="entry name" value="SMALL RIBOSOMAL SUBUNIT BIOGENESIS GTPASE RSGA"/>
    <property type="match status" value="1"/>
</dbReference>
<dbReference type="PANTHER" id="PTHR32120:SF10">
    <property type="entry name" value="SMALL RIBOSOMAL SUBUNIT BIOGENESIS GTPASE RSGA"/>
    <property type="match status" value="1"/>
</dbReference>
<dbReference type="Pfam" id="PF03193">
    <property type="entry name" value="RsgA_GTPase"/>
    <property type="match status" value="1"/>
</dbReference>
<dbReference type="SUPFAM" id="SSF52540">
    <property type="entry name" value="P-loop containing nucleoside triphosphate hydrolases"/>
    <property type="match status" value="1"/>
</dbReference>
<dbReference type="PROSITE" id="PS50936">
    <property type="entry name" value="ENGC_GTPASE"/>
    <property type="match status" value="1"/>
</dbReference>
<dbReference type="PROSITE" id="PS51721">
    <property type="entry name" value="G_CP"/>
    <property type="match status" value="1"/>
</dbReference>
<feature type="chain" id="PRO_0000171548" description="Small ribosomal subunit biogenesis GTPase RsgA">
    <location>
        <begin position="1"/>
        <end position="341"/>
    </location>
</feature>
<feature type="domain" description="CP-type G" evidence="2">
    <location>
        <begin position="112"/>
        <end position="268"/>
    </location>
</feature>
<feature type="binding site" evidence="1">
    <location>
        <begin position="157"/>
        <end position="160"/>
    </location>
    <ligand>
        <name>GTP</name>
        <dbReference type="ChEBI" id="CHEBI:37565"/>
    </ligand>
</feature>
<feature type="binding site" evidence="1">
    <location>
        <begin position="210"/>
        <end position="218"/>
    </location>
    <ligand>
        <name>GTP</name>
        <dbReference type="ChEBI" id="CHEBI:37565"/>
    </ligand>
</feature>
<feature type="binding site" evidence="1">
    <location>
        <position position="290"/>
    </location>
    <ligand>
        <name>Zn(2+)</name>
        <dbReference type="ChEBI" id="CHEBI:29105"/>
    </ligand>
</feature>
<feature type="binding site" evidence="1">
    <location>
        <position position="295"/>
    </location>
    <ligand>
        <name>Zn(2+)</name>
        <dbReference type="ChEBI" id="CHEBI:29105"/>
    </ligand>
</feature>
<feature type="binding site" evidence="1">
    <location>
        <position position="297"/>
    </location>
    <ligand>
        <name>Zn(2+)</name>
        <dbReference type="ChEBI" id="CHEBI:29105"/>
    </ligand>
</feature>
<feature type="binding site" evidence="1">
    <location>
        <position position="303"/>
    </location>
    <ligand>
        <name>Zn(2+)</name>
        <dbReference type="ChEBI" id="CHEBI:29105"/>
    </ligand>
</feature>
<comment type="function">
    <text evidence="1">One of several proteins that assist in the late maturation steps of the functional core of the 30S ribosomal subunit. Helps release RbfA from mature subunits. May play a role in the assembly of ribosomal proteins into the subunit. Circularly permuted GTPase that catalyzes slow GTP hydrolysis, GTPase activity is stimulated by the 30S ribosomal subunit.</text>
</comment>
<comment type="cofactor">
    <cofactor evidence="1">
        <name>Zn(2+)</name>
        <dbReference type="ChEBI" id="CHEBI:29105"/>
    </cofactor>
    <text evidence="1">Binds 1 zinc ion per subunit.</text>
</comment>
<comment type="subunit">
    <text evidence="1">Monomer. Associates with 30S ribosomal subunit, binds 16S rRNA.</text>
</comment>
<comment type="subcellular location">
    <subcellularLocation>
        <location evidence="1">Cytoplasm</location>
    </subcellularLocation>
</comment>
<comment type="similarity">
    <text evidence="1">Belongs to the TRAFAC class YlqF/YawG GTPase family. RsgA subfamily.</text>
</comment>
<proteinExistence type="inferred from homology"/>